<sequence length="443" mass="49006">MSTTDSIVSSQAKQSSWRKSDTTWTLGLFGTAIGAGVLFFPIRAGFGGLIPILLMLVLAYPIAFYCHRALARLCLSGSNPSGNITETVEEHFGKTGGVVITFLYFFAICPLLWIYGVTITNTFMTFWENQLQMPALNRGFVALFLLLLMAFVIWFGKDLMVKVMSYLVWPFIASLVLISLSLIPYWNSAVIDQVDLSNIELTGHDGILVTVWLGISIMVFSFNFSPIVSSFVVSKREEHEKEFGREFTERKCSQIISRASMLMVAVVMFFAFSCLFTLSPQNMADAKAQNIPVLSYLANHFASLSGTKSTFATVLEYGASIIALVAIFKSFFGHYLGTLEGLNGLVLKFGYKGDKTKVSMGKLNTISMIFIMGSTWVVAYANPNILDLIEAMGAPIIASLLCLLPMYAIRKAPSLAKYRGRLDNVFVTLIGLLTILNIVYKLF</sequence>
<keyword id="KW-0029">Amino-acid transport</keyword>
<keyword id="KW-0997">Cell inner membrane</keyword>
<keyword id="KW-1003">Cell membrane</keyword>
<keyword id="KW-0472">Membrane</keyword>
<keyword id="KW-0769">Symport</keyword>
<keyword id="KW-0812">Transmembrane</keyword>
<keyword id="KW-1133">Transmembrane helix</keyword>
<keyword id="KW-0813">Transport</keyword>
<organism>
    <name type="scientific">Salmonella newport (strain SL254)</name>
    <dbReference type="NCBI Taxonomy" id="423368"/>
    <lineage>
        <taxon>Bacteria</taxon>
        <taxon>Pseudomonadati</taxon>
        <taxon>Pseudomonadota</taxon>
        <taxon>Gammaproteobacteria</taxon>
        <taxon>Enterobacterales</taxon>
        <taxon>Enterobacteriaceae</taxon>
        <taxon>Salmonella</taxon>
    </lineage>
</organism>
<reference key="1">
    <citation type="journal article" date="2011" name="J. Bacteriol.">
        <title>Comparative genomics of 28 Salmonella enterica isolates: evidence for CRISPR-mediated adaptive sublineage evolution.</title>
        <authorList>
            <person name="Fricke W.F."/>
            <person name="Mammel M.K."/>
            <person name="McDermott P.F."/>
            <person name="Tartera C."/>
            <person name="White D.G."/>
            <person name="Leclerc J.E."/>
            <person name="Ravel J."/>
            <person name="Cebula T.A."/>
        </authorList>
    </citation>
    <scope>NUCLEOTIDE SEQUENCE [LARGE SCALE GENOMIC DNA]</scope>
    <source>
        <strain>SL254</strain>
    </source>
</reference>
<comment type="function">
    <text evidence="1">Involved in the import of threonine and serine into the cell, with the concomitant import of a proton (symport system).</text>
</comment>
<comment type="catalytic activity">
    <reaction evidence="1">
        <text>L-threonine(in) + H(+)(in) = L-threonine(out) + H(+)(out)</text>
        <dbReference type="Rhea" id="RHEA:28883"/>
        <dbReference type="ChEBI" id="CHEBI:15378"/>
        <dbReference type="ChEBI" id="CHEBI:57926"/>
    </reaction>
    <physiologicalReaction direction="right-to-left" evidence="1">
        <dbReference type="Rhea" id="RHEA:28885"/>
    </physiologicalReaction>
</comment>
<comment type="catalytic activity">
    <reaction evidence="1">
        <text>L-serine(in) + H(+)(in) = L-serine(out) + H(+)(out)</text>
        <dbReference type="Rhea" id="RHEA:28887"/>
        <dbReference type="ChEBI" id="CHEBI:15378"/>
        <dbReference type="ChEBI" id="CHEBI:33384"/>
    </reaction>
    <physiologicalReaction direction="right-to-left" evidence="1">
        <dbReference type="Rhea" id="RHEA:28889"/>
    </physiologicalReaction>
</comment>
<comment type="subcellular location">
    <subcellularLocation>
        <location evidence="1">Cell inner membrane</location>
        <topology evidence="1">Multi-pass membrane protein</topology>
    </subcellularLocation>
</comment>
<comment type="similarity">
    <text evidence="1">Belongs to the amino acid/polyamine transporter 2 family. SdaC/TdcC subfamily.</text>
</comment>
<evidence type="ECO:0000255" key="1">
    <source>
        <dbReference type="HAMAP-Rule" id="MF_01583"/>
    </source>
</evidence>
<accession>B4T6B2</accession>
<name>TDCC_SALNS</name>
<feature type="chain" id="PRO_1000147640" description="Threonine/serine transporter TdcC">
    <location>
        <begin position="1"/>
        <end position="443"/>
    </location>
</feature>
<feature type="transmembrane region" description="Helical" evidence="1">
    <location>
        <begin position="22"/>
        <end position="42"/>
    </location>
</feature>
<feature type="transmembrane region" description="Helical" evidence="1">
    <location>
        <begin position="44"/>
        <end position="64"/>
    </location>
</feature>
<feature type="transmembrane region" description="Helical" evidence="1">
    <location>
        <begin position="97"/>
        <end position="117"/>
    </location>
</feature>
<feature type="transmembrane region" description="Helical" evidence="1">
    <location>
        <begin position="140"/>
        <end position="160"/>
    </location>
</feature>
<feature type="transmembrane region" description="Helical" evidence="1">
    <location>
        <begin position="163"/>
        <end position="183"/>
    </location>
</feature>
<feature type="transmembrane region" description="Helical" evidence="1">
    <location>
        <begin position="207"/>
        <end position="227"/>
    </location>
</feature>
<feature type="transmembrane region" description="Helical" evidence="1">
    <location>
        <begin position="259"/>
        <end position="279"/>
    </location>
</feature>
<feature type="transmembrane region" description="Helical" evidence="1">
    <location>
        <begin position="319"/>
        <end position="339"/>
    </location>
</feature>
<feature type="transmembrane region" description="Helical" evidence="1">
    <location>
        <begin position="366"/>
        <end position="386"/>
    </location>
</feature>
<feature type="transmembrane region" description="Helical" evidence="1">
    <location>
        <begin position="389"/>
        <end position="409"/>
    </location>
</feature>
<feature type="transmembrane region" description="Helical" evidence="1">
    <location>
        <begin position="423"/>
        <end position="443"/>
    </location>
</feature>
<dbReference type="EMBL" id="CP001113">
    <property type="protein sequence ID" value="ACF62761.1"/>
    <property type="molecule type" value="Genomic_DNA"/>
</dbReference>
<dbReference type="RefSeq" id="WP_000108133.1">
    <property type="nucleotide sequence ID" value="NZ_CCMR01000001.1"/>
</dbReference>
<dbReference type="SMR" id="B4T6B2"/>
<dbReference type="KEGG" id="see:SNSL254_A3505"/>
<dbReference type="HOGENOM" id="CLU_052043_1_1_6"/>
<dbReference type="Proteomes" id="UP000008824">
    <property type="component" value="Chromosome"/>
</dbReference>
<dbReference type="GO" id="GO:0005886">
    <property type="term" value="C:plasma membrane"/>
    <property type="evidence" value="ECO:0007669"/>
    <property type="project" value="UniProtKB-SubCell"/>
</dbReference>
<dbReference type="GO" id="GO:0015194">
    <property type="term" value="F:L-serine transmembrane transporter activity"/>
    <property type="evidence" value="ECO:0007669"/>
    <property type="project" value="InterPro"/>
</dbReference>
<dbReference type="GO" id="GO:0015293">
    <property type="term" value="F:symporter activity"/>
    <property type="evidence" value="ECO:0007669"/>
    <property type="project" value="UniProtKB-UniRule"/>
</dbReference>
<dbReference type="GO" id="GO:0015565">
    <property type="term" value="F:threonine efflux transmembrane transporter activity"/>
    <property type="evidence" value="ECO:0007669"/>
    <property type="project" value="InterPro"/>
</dbReference>
<dbReference type="Gene3D" id="1.20.1740.10">
    <property type="entry name" value="Amino acid/polyamine transporter I"/>
    <property type="match status" value="1"/>
</dbReference>
<dbReference type="HAMAP" id="MF_01583">
    <property type="entry name" value="Thr_Ser_transp_TdcC"/>
    <property type="match status" value="1"/>
</dbReference>
<dbReference type="InterPro" id="IPR018227">
    <property type="entry name" value="Amino_acid_transport_2"/>
</dbReference>
<dbReference type="InterPro" id="IPR004694">
    <property type="entry name" value="Hydroxy_aa_transpt"/>
</dbReference>
<dbReference type="InterPro" id="IPR023726">
    <property type="entry name" value="Thr/Ser_transpt_TdcC"/>
</dbReference>
<dbReference type="NCBIfam" id="NF010152">
    <property type="entry name" value="PRK13629.1"/>
    <property type="match status" value="1"/>
</dbReference>
<dbReference type="NCBIfam" id="TIGR00814">
    <property type="entry name" value="stp"/>
    <property type="match status" value="1"/>
</dbReference>
<dbReference type="PANTHER" id="PTHR35334">
    <property type="entry name" value="SERINE TRANSPORTER"/>
    <property type="match status" value="1"/>
</dbReference>
<dbReference type="PANTHER" id="PTHR35334:SF1">
    <property type="entry name" value="THREONINE_SERINE TRANSPORTER TDCC"/>
    <property type="match status" value="1"/>
</dbReference>
<dbReference type="Pfam" id="PF03222">
    <property type="entry name" value="Trp_Tyr_perm"/>
    <property type="match status" value="1"/>
</dbReference>
<proteinExistence type="inferred from homology"/>
<gene>
    <name evidence="1" type="primary">tdcC</name>
    <name type="ordered locus">SNSL254_A3505</name>
</gene>
<protein>
    <recommendedName>
        <fullName evidence="1">Threonine/serine transporter TdcC</fullName>
    </recommendedName>
    <alternativeName>
        <fullName evidence="1">H(+)/threonine-serine symporter</fullName>
    </alternativeName>
</protein>